<organism>
    <name type="scientific">Oleidesulfovibrio alaskensis (strain ATCC BAA-1058 / DSM 17464 / G20)</name>
    <name type="common">Desulfovibrio alaskensis</name>
    <dbReference type="NCBI Taxonomy" id="207559"/>
    <lineage>
        <taxon>Bacteria</taxon>
        <taxon>Pseudomonadati</taxon>
        <taxon>Thermodesulfobacteriota</taxon>
        <taxon>Desulfovibrionia</taxon>
        <taxon>Desulfovibrionales</taxon>
        <taxon>Desulfovibrionaceae</taxon>
        <taxon>Oleidesulfovibrio</taxon>
    </lineage>
</organism>
<keyword id="KW-0547">Nucleotide-binding</keyword>
<keyword id="KW-1185">Reference proteome</keyword>
<gene>
    <name type="ordered locus">Dde_2479</name>
</gene>
<sequence>MPSFDVVSKVDLQEVDNVVNNVKKEVDTRYDFRGSNTELSFDKGGASISILASDDMKMRAVQEMLLANCVRRKVDPKFLDFGKVEAASKGMVKRSVAVKDGISKETAQKIVKKIKASKLKVQAAIQDDQVRVTGKKIDDLQDVIQLLRDDDFGVPLQFINMRS</sequence>
<accession>Q30YH0</accession>
<protein>
    <recommendedName>
        <fullName evidence="1">Nucleotide-binding protein Dde_2479</fullName>
    </recommendedName>
</protein>
<evidence type="ECO:0000255" key="1">
    <source>
        <dbReference type="HAMAP-Rule" id="MF_00632"/>
    </source>
</evidence>
<name>Y2479_OLEA2</name>
<comment type="function">
    <text evidence="1">Nucleotide-binding protein.</text>
</comment>
<comment type="similarity">
    <text evidence="1">Belongs to the YajQ family.</text>
</comment>
<reference key="1">
    <citation type="journal article" date="2011" name="J. Bacteriol.">
        <title>Complete genome sequence and updated annotation of Desulfovibrio alaskensis G20.</title>
        <authorList>
            <person name="Hauser L.J."/>
            <person name="Land M.L."/>
            <person name="Brown S.D."/>
            <person name="Larimer F."/>
            <person name="Keller K.L."/>
            <person name="Rapp-Giles B.J."/>
            <person name="Price M.N."/>
            <person name="Lin M."/>
            <person name="Bruce D.C."/>
            <person name="Detter J.C."/>
            <person name="Tapia R."/>
            <person name="Han C.S."/>
            <person name="Goodwin L.A."/>
            <person name="Cheng J.F."/>
            <person name="Pitluck S."/>
            <person name="Copeland A."/>
            <person name="Lucas S."/>
            <person name="Nolan M."/>
            <person name="Lapidus A.L."/>
            <person name="Palumbo A.V."/>
            <person name="Wall J.D."/>
        </authorList>
    </citation>
    <scope>NUCLEOTIDE SEQUENCE [LARGE SCALE GENOMIC DNA]</scope>
    <source>
        <strain>ATCC BAA-1058 / DSM 17464 / G20</strain>
    </source>
</reference>
<feature type="chain" id="PRO_0000261932" description="Nucleotide-binding protein Dde_2479">
    <location>
        <begin position="1"/>
        <end position="163"/>
    </location>
</feature>
<proteinExistence type="inferred from homology"/>
<dbReference type="EMBL" id="CP000112">
    <property type="protein sequence ID" value="ABB39276.1"/>
    <property type="molecule type" value="Genomic_DNA"/>
</dbReference>
<dbReference type="RefSeq" id="WP_011368341.1">
    <property type="nucleotide sequence ID" value="NC_007519.1"/>
</dbReference>
<dbReference type="SMR" id="Q30YH0"/>
<dbReference type="STRING" id="207559.Dde_2479"/>
<dbReference type="KEGG" id="dde:Dde_2479"/>
<dbReference type="eggNOG" id="COG1666">
    <property type="taxonomic scope" value="Bacteria"/>
</dbReference>
<dbReference type="HOGENOM" id="CLU_099839_1_0_7"/>
<dbReference type="Proteomes" id="UP000002710">
    <property type="component" value="Chromosome"/>
</dbReference>
<dbReference type="GO" id="GO:0005829">
    <property type="term" value="C:cytosol"/>
    <property type="evidence" value="ECO:0007669"/>
    <property type="project" value="TreeGrafter"/>
</dbReference>
<dbReference type="GO" id="GO:0000166">
    <property type="term" value="F:nucleotide binding"/>
    <property type="evidence" value="ECO:0007669"/>
    <property type="project" value="TreeGrafter"/>
</dbReference>
<dbReference type="CDD" id="cd11740">
    <property type="entry name" value="YajQ_like"/>
    <property type="match status" value="1"/>
</dbReference>
<dbReference type="Gene3D" id="3.30.70.860">
    <property type="match status" value="1"/>
</dbReference>
<dbReference type="Gene3D" id="3.30.70.990">
    <property type="entry name" value="YajQ-like, domain 2"/>
    <property type="match status" value="1"/>
</dbReference>
<dbReference type="HAMAP" id="MF_00632">
    <property type="entry name" value="YajQ"/>
    <property type="match status" value="1"/>
</dbReference>
<dbReference type="InterPro" id="IPR007551">
    <property type="entry name" value="DUF520"/>
</dbReference>
<dbReference type="InterPro" id="IPR035571">
    <property type="entry name" value="UPF0234-like_C"/>
</dbReference>
<dbReference type="InterPro" id="IPR035570">
    <property type="entry name" value="UPF0234_N"/>
</dbReference>
<dbReference type="InterPro" id="IPR036183">
    <property type="entry name" value="YajQ-like_sf"/>
</dbReference>
<dbReference type="NCBIfam" id="NF003819">
    <property type="entry name" value="PRK05412.1"/>
    <property type="match status" value="1"/>
</dbReference>
<dbReference type="PANTHER" id="PTHR30476">
    <property type="entry name" value="UPF0234 PROTEIN YAJQ"/>
    <property type="match status" value="1"/>
</dbReference>
<dbReference type="PANTHER" id="PTHR30476:SF0">
    <property type="entry name" value="UPF0234 PROTEIN YAJQ"/>
    <property type="match status" value="1"/>
</dbReference>
<dbReference type="Pfam" id="PF04461">
    <property type="entry name" value="DUF520"/>
    <property type="match status" value="1"/>
</dbReference>
<dbReference type="SUPFAM" id="SSF89963">
    <property type="entry name" value="YajQ-like"/>
    <property type="match status" value="2"/>
</dbReference>